<organism>
    <name type="scientific">Hydrogenovibrio crunogenus (strain DSM 25203 / XCL-2)</name>
    <name type="common">Thiomicrospira crunogena</name>
    <dbReference type="NCBI Taxonomy" id="317025"/>
    <lineage>
        <taxon>Bacteria</taxon>
        <taxon>Pseudomonadati</taxon>
        <taxon>Pseudomonadota</taxon>
        <taxon>Gammaproteobacteria</taxon>
        <taxon>Thiotrichales</taxon>
        <taxon>Piscirickettsiaceae</taxon>
        <taxon>Hydrogenovibrio</taxon>
    </lineage>
</organism>
<gene>
    <name evidence="1" type="primary">rpsP</name>
    <name type="ordered locus">Tcr_0647</name>
</gene>
<evidence type="ECO:0000255" key="1">
    <source>
        <dbReference type="HAMAP-Rule" id="MF_00385"/>
    </source>
</evidence>
<evidence type="ECO:0000305" key="2"/>
<comment type="similarity">
    <text evidence="1">Belongs to the bacterial ribosomal protein bS16 family.</text>
</comment>
<proteinExistence type="inferred from homology"/>
<accession>Q31HY0</accession>
<reference key="1">
    <citation type="journal article" date="2006" name="PLoS Biol.">
        <title>The genome of deep-sea vent chemolithoautotroph Thiomicrospira crunogena XCL-2.</title>
        <authorList>
            <person name="Scott K.M."/>
            <person name="Sievert S.M."/>
            <person name="Abril F.N."/>
            <person name="Ball L.A."/>
            <person name="Barrett C.J."/>
            <person name="Blake R.A."/>
            <person name="Boller A.J."/>
            <person name="Chain P.S.G."/>
            <person name="Clark J.A."/>
            <person name="Davis C.R."/>
            <person name="Detter C."/>
            <person name="Do K.F."/>
            <person name="Dobrinski K.P."/>
            <person name="Faza B.I."/>
            <person name="Fitzpatrick K.A."/>
            <person name="Freyermuth S.K."/>
            <person name="Harmer T.L."/>
            <person name="Hauser L.J."/>
            <person name="Huegler M."/>
            <person name="Kerfeld C.A."/>
            <person name="Klotz M.G."/>
            <person name="Kong W.W."/>
            <person name="Land M."/>
            <person name="Lapidus A."/>
            <person name="Larimer F.W."/>
            <person name="Longo D.L."/>
            <person name="Lucas S."/>
            <person name="Malfatti S.A."/>
            <person name="Massey S.E."/>
            <person name="Martin D.D."/>
            <person name="McCuddin Z."/>
            <person name="Meyer F."/>
            <person name="Moore J.L."/>
            <person name="Ocampo L.H. Jr."/>
            <person name="Paul J.H."/>
            <person name="Paulsen I.T."/>
            <person name="Reep D.K."/>
            <person name="Ren Q."/>
            <person name="Ross R.L."/>
            <person name="Sato P.Y."/>
            <person name="Thomas P."/>
            <person name="Tinkham L.E."/>
            <person name="Zeruth G.T."/>
        </authorList>
    </citation>
    <scope>NUCLEOTIDE SEQUENCE [LARGE SCALE GENOMIC DNA]</scope>
    <source>
        <strain>DSM 25203 / XCL-2</strain>
    </source>
</reference>
<sequence length="80" mass="9071">MVVIRLARGGAKKNPYYRLMVADQRKSTNGRFIEQVGFYNPTARGQEEPLRLDMARIEHWVGQGAQLSPRVAKLVKDASK</sequence>
<protein>
    <recommendedName>
        <fullName evidence="1">Small ribosomal subunit protein bS16</fullName>
    </recommendedName>
    <alternativeName>
        <fullName evidence="2">30S ribosomal protein S16</fullName>
    </alternativeName>
</protein>
<dbReference type="EMBL" id="CP000109">
    <property type="protein sequence ID" value="ABB41243.1"/>
    <property type="molecule type" value="Genomic_DNA"/>
</dbReference>
<dbReference type="SMR" id="Q31HY0"/>
<dbReference type="STRING" id="317025.Tcr_0647"/>
<dbReference type="KEGG" id="tcx:Tcr_0647"/>
<dbReference type="eggNOG" id="COG0228">
    <property type="taxonomic scope" value="Bacteria"/>
</dbReference>
<dbReference type="HOGENOM" id="CLU_100590_5_1_6"/>
<dbReference type="OrthoDB" id="9807878at2"/>
<dbReference type="GO" id="GO:0005737">
    <property type="term" value="C:cytoplasm"/>
    <property type="evidence" value="ECO:0007669"/>
    <property type="project" value="UniProtKB-ARBA"/>
</dbReference>
<dbReference type="GO" id="GO:0015935">
    <property type="term" value="C:small ribosomal subunit"/>
    <property type="evidence" value="ECO:0007669"/>
    <property type="project" value="TreeGrafter"/>
</dbReference>
<dbReference type="GO" id="GO:0003735">
    <property type="term" value="F:structural constituent of ribosome"/>
    <property type="evidence" value="ECO:0007669"/>
    <property type="project" value="InterPro"/>
</dbReference>
<dbReference type="GO" id="GO:0006412">
    <property type="term" value="P:translation"/>
    <property type="evidence" value="ECO:0007669"/>
    <property type="project" value="UniProtKB-UniRule"/>
</dbReference>
<dbReference type="Gene3D" id="3.30.1320.10">
    <property type="match status" value="1"/>
</dbReference>
<dbReference type="HAMAP" id="MF_00385">
    <property type="entry name" value="Ribosomal_bS16"/>
    <property type="match status" value="1"/>
</dbReference>
<dbReference type="InterPro" id="IPR000307">
    <property type="entry name" value="Ribosomal_bS16"/>
</dbReference>
<dbReference type="InterPro" id="IPR020592">
    <property type="entry name" value="Ribosomal_bS16_CS"/>
</dbReference>
<dbReference type="InterPro" id="IPR023803">
    <property type="entry name" value="Ribosomal_bS16_dom_sf"/>
</dbReference>
<dbReference type="NCBIfam" id="TIGR00002">
    <property type="entry name" value="S16"/>
    <property type="match status" value="1"/>
</dbReference>
<dbReference type="PANTHER" id="PTHR12919">
    <property type="entry name" value="30S RIBOSOMAL PROTEIN S16"/>
    <property type="match status" value="1"/>
</dbReference>
<dbReference type="PANTHER" id="PTHR12919:SF20">
    <property type="entry name" value="SMALL RIBOSOMAL SUBUNIT PROTEIN BS16M"/>
    <property type="match status" value="1"/>
</dbReference>
<dbReference type="Pfam" id="PF00886">
    <property type="entry name" value="Ribosomal_S16"/>
    <property type="match status" value="1"/>
</dbReference>
<dbReference type="SUPFAM" id="SSF54565">
    <property type="entry name" value="Ribosomal protein S16"/>
    <property type="match status" value="1"/>
</dbReference>
<dbReference type="PROSITE" id="PS00732">
    <property type="entry name" value="RIBOSOMAL_S16"/>
    <property type="match status" value="1"/>
</dbReference>
<name>RS16_HYDCU</name>
<keyword id="KW-0687">Ribonucleoprotein</keyword>
<keyword id="KW-0689">Ribosomal protein</keyword>
<feature type="chain" id="PRO_0000243889" description="Small ribosomal subunit protein bS16">
    <location>
        <begin position="1"/>
        <end position="80"/>
    </location>
</feature>